<feature type="chain" id="PRO_0000266531" description="Large ribosomal subunit protein uL14">
    <location>
        <begin position="1"/>
        <end position="122"/>
    </location>
</feature>
<sequence>MIQTQSMLDVADNSGARRVMCIKVLGGSHRRYAGIGDIIKVTVKEAIPRGKVKKGQVMTAVVVRTRHGVRRADGSIIRFDGNAAVLLNNKQEPIGTRIFGPVTRELRTEKFMKIVSLAPEVL</sequence>
<gene>
    <name evidence="1" type="primary">rplN</name>
    <name type="ordered locus">PSPTO_0636</name>
</gene>
<accession>Q889W1</accession>
<proteinExistence type="inferred from homology"/>
<comment type="function">
    <text evidence="1">Binds to 23S rRNA. Forms part of two intersubunit bridges in the 70S ribosome.</text>
</comment>
<comment type="subunit">
    <text evidence="1">Part of the 50S ribosomal subunit. Forms a cluster with proteins L3 and L19. In the 70S ribosome, L14 and L19 interact and together make contacts with the 16S rRNA in bridges B5 and B8.</text>
</comment>
<comment type="similarity">
    <text evidence="1">Belongs to the universal ribosomal protein uL14 family.</text>
</comment>
<organism>
    <name type="scientific">Pseudomonas syringae pv. tomato (strain ATCC BAA-871 / DC3000)</name>
    <dbReference type="NCBI Taxonomy" id="223283"/>
    <lineage>
        <taxon>Bacteria</taxon>
        <taxon>Pseudomonadati</taxon>
        <taxon>Pseudomonadota</taxon>
        <taxon>Gammaproteobacteria</taxon>
        <taxon>Pseudomonadales</taxon>
        <taxon>Pseudomonadaceae</taxon>
        <taxon>Pseudomonas</taxon>
    </lineage>
</organism>
<keyword id="KW-1185">Reference proteome</keyword>
<keyword id="KW-0687">Ribonucleoprotein</keyword>
<keyword id="KW-0689">Ribosomal protein</keyword>
<keyword id="KW-0694">RNA-binding</keyword>
<keyword id="KW-0699">rRNA-binding</keyword>
<protein>
    <recommendedName>
        <fullName evidence="1">Large ribosomal subunit protein uL14</fullName>
    </recommendedName>
    <alternativeName>
        <fullName evidence="2">50S ribosomal protein L14</fullName>
    </alternativeName>
</protein>
<evidence type="ECO:0000255" key="1">
    <source>
        <dbReference type="HAMAP-Rule" id="MF_01367"/>
    </source>
</evidence>
<evidence type="ECO:0000305" key="2"/>
<name>RL14_PSESM</name>
<reference key="1">
    <citation type="journal article" date="2003" name="Proc. Natl. Acad. Sci. U.S.A.">
        <title>The complete genome sequence of the Arabidopsis and tomato pathogen Pseudomonas syringae pv. tomato DC3000.</title>
        <authorList>
            <person name="Buell C.R."/>
            <person name="Joardar V."/>
            <person name="Lindeberg M."/>
            <person name="Selengut J."/>
            <person name="Paulsen I.T."/>
            <person name="Gwinn M.L."/>
            <person name="Dodson R.J."/>
            <person name="DeBoy R.T."/>
            <person name="Durkin A.S."/>
            <person name="Kolonay J.F."/>
            <person name="Madupu R."/>
            <person name="Daugherty S.C."/>
            <person name="Brinkac L.M."/>
            <person name="Beanan M.J."/>
            <person name="Haft D.H."/>
            <person name="Nelson W.C."/>
            <person name="Davidsen T.M."/>
            <person name="Zafar N."/>
            <person name="Zhou L."/>
            <person name="Liu J."/>
            <person name="Yuan Q."/>
            <person name="Khouri H.M."/>
            <person name="Fedorova N.B."/>
            <person name="Tran B."/>
            <person name="Russell D."/>
            <person name="Berry K.J."/>
            <person name="Utterback T.R."/>
            <person name="Van Aken S.E."/>
            <person name="Feldblyum T.V."/>
            <person name="D'Ascenzo M."/>
            <person name="Deng W.-L."/>
            <person name="Ramos A.R."/>
            <person name="Alfano J.R."/>
            <person name="Cartinhour S."/>
            <person name="Chatterjee A.K."/>
            <person name="Delaney T.P."/>
            <person name="Lazarowitz S.G."/>
            <person name="Martin G.B."/>
            <person name="Schneider D.J."/>
            <person name="Tang X."/>
            <person name="Bender C.L."/>
            <person name="White O."/>
            <person name="Fraser C.M."/>
            <person name="Collmer A."/>
        </authorList>
    </citation>
    <scope>NUCLEOTIDE SEQUENCE [LARGE SCALE GENOMIC DNA]</scope>
    <source>
        <strain>ATCC BAA-871 / DC3000</strain>
    </source>
</reference>
<dbReference type="EMBL" id="AE016853">
    <property type="protein sequence ID" value="AAO54178.1"/>
    <property type="molecule type" value="Genomic_DNA"/>
</dbReference>
<dbReference type="RefSeq" id="NP_790483.1">
    <property type="nucleotide sequence ID" value="NC_004578.1"/>
</dbReference>
<dbReference type="RefSeq" id="WP_002555479.1">
    <property type="nucleotide sequence ID" value="NC_004578.1"/>
</dbReference>
<dbReference type="SMR" id="Q889W1"/>
<dbReference type="STRING" id="223283.PSPTO_0636"/>
<dbReference type="GeneID" id="98285428"/>
<dbReference type="KEGG" id="pst:PSPTO_0636"/>
<dbReference type="PATRIC" id="fig|223283.9.peg.642"/>
<dbReference type="eggNOG" id="COG0093">
    <property type="taxonomic scope" value="Bacteria"/>
</dbReference>
<dbReference type="HOGENOM" id="CLU_095071_2_1_6"/>
<dbReference type="OrthoDB" id="9806379at2"/>
<dbReference type="PhylomeDB" id="Q889W1"/>
<dbReference type="PRO" id="PR:Q889W1"/>
<dbReference type="Proteomes" id="UP000002515">
    <property type="component" value="Chromosome"/>
</dbReference>
<dbReference type="GO" id="GO:0022625">
    <property type="term" value="C:cytosolic large ribosomal subunit"/>
    <property type="evidence" value="ECO:0007669"/>
    <property type="project" value="TreeGrafter"/>
</dbReference>
<dbReference type="GO" id="GO:0070180">
    <property type="term" value="F:large ribosomal subunit rRNA binding"/>
    <property type="evidence" value="ECO:0007669"/>
    <property type="project" value="TreeGrafter"/>
</dbReference>
<dbReference type="GO" id="GO:0003735">
    <property type="term" value="F:structural constituent of ribosome"/>
    <property type="evidence" value="ECO:0007669"/>
    <property type="project" value="InterPro"/>
</dbReference>
<dbReference type="GO" id="GO:0006412">
    <property type="term" value="P:translation"/>
    <property type="evidence" value="ECO:0007669"/>
    <property type="project" value="UniProtKB-UniRule"/>
</dbReference>
<dbReference type="CDD" id="cd00337">
    <property type="entry name" value="Ribosomal_uL14"/>
    <property type="match status" value="1"/>
</dbReference>
<dbReference type="FunFam" id="2.40.150.20:FF:000001">
    <property type="entry name" value="50S ribosomal protein L14"/>
    <property type="match status" value="1"/>
</dbReference>
<dbReference type="Gene3D" id="2.40.150.20">
    <property type="entry name" value="Ribosomal protein L14"/>
    <property type="match status" value="1"/>
</dbReference>
<dbReference type="HAMAP" id="MF_01367">
    <property type="entry name" value="Ribosomal_uL14"/>
    <property type="match status" value="1"/>
</dbReference>
<dbReference type="InterPro" id="IPR000218">
    <property type="entry name" value="Ribosomal_uL14"/>
</dbReference>
<dbReference type="InterPro" id="IPR005745">
    <property type="entry name" value="Ribosomal_uL14_bac-type"/>
</dbReference>
<dbReference type="InterPro" id="IPR019972">
    <property type="entry name" value="Ribosomal_uL14_CS"/>
</dbReference>
<dbReference type="InterPro" id="IPR036853">
    <property type="entry name" value="Ribosomal_uL14_sf"/>
</dbReference>
<dbReference type="NCBIfam" id="TIGR01067">
    <property type="entry name" value="rplN_bact"/>
    <property type="match status" value="1"/>
</dbReference>
<dbReference type="PANTHER" id="PTHR11761">
    <property type="entry name" value="50S/60S RIBOSOMAL PROTEIN L14/L23"/>
    <property type="match status" value="1"/>
</dbReference>
<dbReference type="PANTHER" id="PTHR11761:SF3">
    <property type="entry name" value="LARGE RIBOSOMAL SUBUNIT PROTEIN UL14M"/>
    <property type="match status" value="1"/>
</dbReference>
<dbReference type="Pfam" id="PF00238">
    <property type="entry name" value="Ribosomal_L14"/>
    <property type="match status" value="1"/>
</dbReference>
<dbReference type="SMART" id="SM01374">
    <property type="entry name" value="Ribosomal_L14"/>
    <property type="match status" value="1"/>
</dbReference>
<dbReference type="SUPFAM" id="SSF50193">
    <property type="entry name" value="Ribosomal protein L14"/>
    <property type="match status" value="1"/>
</dbReference>
<dbReference type="PROSITE" id="PS00049">
    <property type="entry name" value="RIBOSOMAL_L14"/>
    <property type="match status" value="1"/>
</dbReference>